<feature type="initiator methionine" description="Removed">
    <location>
        <position position="1"/>
    </location>
</feature>
<feature type="chain" id="PRO_0000073500" description="Calcineurin subunit B type 2">
    <location>
        <begin position="2"/>
        <end position="179"/>
    </location>
</feature>
<feature type="domain" description="EF-hand 1" evidence="3">
    <location>
        <begin position="18"/>
        <end position="53"/>
    </location>
</feature>
<feature type="domain" description="EF-hand 2" evidence="3">
    <location>
        <begin position="57"/>
        <end position="85"/>
    </location>
</feature>
<feature type="domain" description="EF-hand 3" evidence="3">
    <location>
        <begin position="87"/>
        <end position="122"/>
    </location>
</feature>
<feature type="domain" description="EF-hand 4" evidence="3">
    <location>
        <begin position="128"/>
        <end position="163"/>
    </location>
</feature>
<feature type="region of interest" description="Calcineurin A binding" evidence="2">
    <location>
        <begin position="131"/>
        <end position="136"/>
    </location>
</feature>
<feature type="binding site" evidence="3">
    <location>
        <position position="31"/>
    </location>
    <ligand>
        <name>Ca(2+)</name>
        <dbReference type="ChEBI" id="CHEBI:29108"/>
        <label>1</label>
    </ligand>
</feature>
<feature type="binding site" evidence="3">
    <location>
        <position position="33"/>
    </location>
    <ligand>
        <name>Ca(2+)</name>
        <dbReference type="ChEBI" id="CHEBI:29108"/>
        <label>1</label>
    </ligand>
</feature>
<feature type="binding site" evidence="3">
    <location>
        <position position="35"/>
    </location>
    <ligand>
        <name>Ca(2+)</name>
        <dbReference type="ChEBI" id="CHEBI:29108"/>
        <label>1</label>
    </ligand>
</feature>
<feature type="binding site" evidence="3">
    <location>
        <position position="37"/>
    </location>
    <ligand>
        <name>Ca(2+)</name>
        <dbReference type="ChEBI" id="CHEBI:29108"/>
        <label>1</label>
    </ligand>
</feature>
<feature type="binding site" evidence="3">
    <location>
        <position position="42"/>
    </location>
    <ligand>
        <name>Ca(2+)</name>
        <dbReference type="ChEBI" id="CHEBI:29108"/>
        <label>1</label>
    </ligand>
</feature>
<feature type="binding site" evidence="3">
    <location>
        <position position="63"/>
    </location>
    <ligand>
        <name>Ca(2+)</name>
        <dbReference type="ChEBI" id="CHEBI:29108"/>
        <label>2</label>
    </ligand>
</feature>
<feature type="binding site" evidence="3">
    <location>
        <position position="65"/>
    </location>
    <ligand>
        <name>Ca(2+)</name>
        <dbReference type="ChEBI" id="CHEBI:29108"/>
        <label>2</label>
    </ligand>
</feature>
<feature type="binding site" evidence="3">
    <location>
        <position position="67"/>
    </location>
    <ligand>
        <name>Ca(2+)</name>
        <dbReference type="ChEBI" id="CHEBI:29108"/>
        <label>2</label>
    </ligand>
</feature>
<feature type="binding site" evidence="3">
    <location>
        <position position="69"/>
    </location>
    <ligand>
        <name>Ca(2+)</name>
        <dbReference type="ChEBI" id="CHEBI:29108"/>
        <label>2</label>
    </ligand>
</feature>
<feature type="binding site" evidence="3">
    <location>
        <position position="74"/>
    </location>
    <ligand>
        <name>Ca(2+)</name>
        <dbReference type="ChEBI" id="CHEBI:29108"/>
        <label>2</label>
    </ligand>
</feature>
<feature type="binding site" evidence="3">
    <location>
        <position position="100"/>
    </location>
    <ligand>
        <name>Ca(2+)</name>
        <dbReference type="ChEBI" id="CHEBI:29108"/>
        <label>3</label>
    </ligand>
</feature>
<feature type="binding site" evidence="3">
    <location>
        <position position="102"/>
    </location>
    <ligand>
        <name>Ca(2+)</name>
        <dbReference type="ChEBI" id="CHEBI:29108"/>
        <label>3</label>
    </ligand>
</feature>
<feature type="binding site" evidence="3">
    <location>
        <position position="104"/>
    </location>
    <ligand>
        <name>Ca(2+)</name>
        <dbReference type="ChEBI" id="CHEBI:29108"/>
        <label>3</label>
    </ligand>
</feature>
<feature type="binding site" evidence="3">
    <location>
        <position position="111"/>
    </location>
    <ligand>
        <name>Ca(2+)</name>
        <dbReference type="ChEBI" id="CHEBI:29108"/>
        <label>3</label>
    </ligand>
</feature>
<feature type="binding site" evidence="3">
    <location>
        <position position="141"/>
    </location>
    <ligand>
        <name>Ca(2+)</name>
        <dbReference type="ChEBI" id="CHEBI:29108"/>
        <label>4</label>
    </ligand>
</feature>
<feature type="binding site" evidence="3">
    <location>
        <position position="143"/>
    </location>
    <ligand>
        <name>Ca(2+)</name>
        <dbReference type="ChEBI" id="CHEBI:29108"/>
        <label>4</label>
    </ligand>
</feature>
<feature type="binding site" evidence="3">
    <location>
        <position position="145"/>
    </location>
    <ligand>
        <name>Ca(2+)</name>
        <dbReference type="ChEBI" id="CHEBI:29108"/>
        <label>4</label>
    </ligand>
</feature>
<feature type="binding site" evidence="3">
    <location>
        <position position="147"/>
    </location>
    <ligand>
        <name>Ca(2+)</name>
        <dbReference type="ChEBI" id="CHEBI:29108"/>
        <label>4</label>
    </ligand>
</feature>
<feature type="binding site" evidence="3">
    <location>
        <position position="152"/>
    </location>
    <ligand>
        <name>Ca(2+)</name>
        <dbReference type="ChEBI" id="CHEBI:29108"/>
        <label>4</label>
    </ligand>
</feature>
<feature type="site" description="Interaction with PxVP motif in substrates of the catalytic subunit" evidence="1">
    <location>
        <position position="118"/>
    </location>
</feature>
<feature type="site" description="Interaction with PxVP motif in substrates of the catalytic subunit" evidence="1">
    <location>
        <position position="122"/>
    </location>
</feature>
<feature type="lipid moiety-binding region" description="N-myristoyl glycine" evidence="1">
    <location>
        <position position="2"/>
    </location>
</feature>
<gene>
    <name type="primary">Ppp3r2</name>
</gene>
<keyword id="KW-0106">Calcium</keyword>
<keyword id="KW-0449">Lipoprotein</keyword>
<keyword id="KW-0479">Metal-binding</keyword>
<keyword id="KW-0496">Mitochondrion</keyword>
<keyword id="KW-0519">Myristate</keyword>
<keyword id="KW-1185">Reference proteome</keyword>
<keyword id="KW-0677">Repeat</keyword>
<sequence>MGNEASYQTELCNHFDQEEIRRLGKSFRKLDLDKSGSLSIEEFMRLPELQQNPLVGRVIDIFDTDGNGEVDFHEFIVGTSQFSVKGDEEQKLRFAFRIYDMDNDGFISNGELFQVLKMMVGNNLKDWQLQQLVDKSILVLDKDGDGRISFEEFSDVVKTMEIHKKLVVFVEHGQEDLKA</sequence>
<proteinExistence type="evidence at protein level"/>
<reference key="1">
    <citation type="journal article" date="1992" name="Biochem. Biophys. Res. Commun.">
        <title>Structure and expression of two isoforms of the murine calmodulin-dependent protein phosphatase regulatory subunit (calcineurin B).</title>
        <authorList>
            <person name="Ueki K."/>
            <person name="Muramatsu T."/>
            <person name="Kincaid R.L."/>
        </authorList>
    </citation>
    <scope>NUCLEOTIDE SEQUENCE [MRNA]</scope>
    <scope>TISSUE SPECIFICITY</scope>
</reference>
<reference key="2">
    <citation type="journal article" date="2005" name="Science">
        <title>The transcriptional landscape of the mammalian genome.</title>
        <authorList>
            <person name="Carninci P."/>
            <person name="Kasukawa T."/>
            <person name="Katayama S."/>
            <person name="Gough J."/>
            <person name="Frith M.C."/>
            <person name="Maeda N."/>
            <person name="Oyama R."/>
            <person name="Ravasi T."/>
            <person name="Lenhard B."/>
            <person name="Wells C."/>
            <person name="Kodzius R."/>
            <person name="Shimokawa K."/>
            <person name="Bajic V.B."/>
            <person name="Brenner S.E."/>
            <person name="Batalov S."/>
            <person name="Forrest A.R."/>
            <person name="Zavolan M."/>
            <person name="Davis M.J."/>
            <person name="Wilming L.G."/>
            <person name="Aidinis V."/>
            <person name="Allen J.E."/>
            <person name="Ambesi-Impiombato A."/>
            <person name="Apweiler R."/>
            <person name="Aturaliya R.N."/>
            <person name="Bailey T.L."/>
            <person name="Bansal M."/>
            <person name="Baxter L."/>
            <person name="Beisel K.W."/>
            <person name="Bersano T."/>
            <person name="Bono H."/>
            <person name="Chalk A.M."/>
            <person name="Chiu K.P."/>
            <person name="Choudhary V."/>
            <person name="Christoffels A."/>
            <person name="Clutterbuck D.R."/>
            <person name="Crowe M.L."/>
            <person name="Dalla E."/>
            <person name="Dalrymple B.P."/>
            <person name="de Bono B."/>
            <person name="Della Gatta G."/>
            <person name="di Bernardo D."/>
            <person name="Down T."/>
            <person name="Engstrom P."/>
            <person name="Fagiolini M."/>
            <person name="Faulkner G."/>
            <person name="Fletcher C.F."/>
            <person name="Fukushima T."/>
            <person name="Furuno M."/>
            <person name="Futaki S."/>
            <person name="Gariboldi M."/>
            <person name="Georgii-Hemming P."/>
            <person name="Gingeras T.R."/>
            <person name="Gojobori T."/>
            <person name="Green R.E."/>
            <person name="Gustincich S."/>
            <person name="Harbers M."/>
            <person name="Hayashi Y."/>
            <person name="Hensch T.K."/>
            <person name="Hirokawa N."/>
            <person name="Hill D."/>
            <person name="Huminiecki L."/>
            <person name="Iacono M."/>
            <person name="Ikeo K."/>
            <person name="Iwama A."/>
            <person name="Ishikawa T."/>
            <person name="Jakt M."/>
            <person name="Kanapin A."/>
            <person name="Katoh M."/>
            <person name="Kawasawa Y."/>
            <person name="Kelso J."/>
            <person name="Kitamura H."/>
            <person name="Kitano H."/>
            <person name="Kollias G."/>
            <person name="Krishnan S.P."/>
            <person name="Kruger A."/>
            <person name="Kummerfeld S.K."/>
            <person name="Kurochkin I.V."/>
            <person name="Lareau L.F."/>
            <person name="Lazarevic D."/>
            <person name="Lipovich L."/>
            <person name="Liu J."/>
            <person name="Liuni S."/>
            <person name="McWilliam S."/>
            <person name="Madan Babu M."/>
            <person name="Madera M."/>
            <person name="Marchionni L."/>
            <person name="Matsuda H."/>
            <person name="Matsuzawa S."/>
            <person name="Miki H."/>
            <person name="Mignone F."/>
            <person name="Miyake S."/>
            <person name="Morris K."/>
            <person name="Mottagui-Tabar S."/>
            <person name="Mulder N."/>
            <person name="Nakano N."/>
            <person name="Nakauchi H."/>
            <person name="Ng P."/>
            <person name="Nilsson R."/>
            <person name="Nishiguchi S."/>
            <person name="Nishikawa S."/>
            <person name="Nori F."/>
            <person name="Ohara O."/>
            <person name="Okazaki Y."/>
            <person name="Orlando V."/>
            <person name="Pang K.C."/>
            <person name="Pavan W.J."/>
            <person name="Pavesi G."/>
            <person name="Pesole G."/>
            <person name="Petrovsky N."/>
            <person name="Piazza S."/>
            <person name="Reed J."/>
            <person name="Reid J.F."/>
            <person name="Ring B.Z."/>
            <person name="Ringwald M."/>
            <person name="Rost B."/>
            <person name="Ruan Y."/>
            <person name="Salzberg S.L."/>
            <person name="Sandelin A."/>
            <person name="Schneider C."/>
            <person name="Schoenbach C."/>
            <person name="Sekiguchi K."/>
            <person name="Semple C.A."/>
            <person name="Seno S."/>
            <person name="Sessa L."/>
            <person name="Sheng Y."/>
            <person name="Shibata Y."/>
            <person name="Shimada H."/>
            <person name="Shimada K."/>
            <person name="Silva D."/>
            <person name="Sinclair B."/>
            <person name="Sperling S."/>
            <person name="Stupka E."/>
            <person name="Sugiura K."/>
            <person name="Sultana R."/>
            <person name="Takenaka Y."/>
            <person name="Taki K."/>
            <person name="Tammoja K."/>
            <person name="Tan S.L."/>
            <person name="Tang S."/>
            <person name="Taylor M.S."/>
            <person name="Tegner J."/>
            <person name="Teichmann S.A."/>
            <person name="Ueda H.R."/>
            <person name="van Nimwegen E."/>
            <person name="Verardo R."/>
            <person name="Wei C.L."/>
            <person name="Yagi K."/>
            <person name="Yamanishi H."/>
            <person name="Zabarovsky E."/>
            <person name="Zhu S."/>
            <person name="Zimmer A."/>
            <person name="Hide W."/>
            <person name="Bult C."/>
            <person name="Grimmond S.M."/>
            <person name="Teasdale R.D."/>
            <person name="Liu E.T."/>
            <person name="Brusic V."/>
            <person name="Quackenbush J."/>
            <person name="Wahlestedt C."/>
            <person name="Mattick J.S."/>
            <person name="Hume D.A."/>
            <person name="Kai C."/>
            <person name="Sasaki D."/>
            <person name="Tomaru Y."/>
            <person name="Fukuda S."/>
            <person name="Kanamori-Katayama M."/>
            <person name="Suzuki M."/>
            <person name="Aoki J."/>
            <person name="Arakawa T."/>
            <person name="Iida J."/>
            <person name="Imamura K."/>
            <person name="Itoh M."/>
            <person name="Kato T."/>
            <person name="Kawaji H."/>
            <person name="Kawagashira N."/>
            <person name="Kawashima T."/>
            <person name="Kojima M."/>
            <person name="Kondo S."/>
            <person name="Konno H."/>
            <person name="Nakano K."/>
            <person name="Ninomiya N."/>
            <person name="Nishio T."/>
            <person name="Okada M."/>
            <person name="Plessy C."/>
            <person name="Shibata K."/>
            <person name="Shiraki T."/>
            <person name="Suzuki S."/>
            <person name="Tagami M."/>
            <person name="Waki K."/>
            <person name="Watahiki A."/>
            <person name="Okamura-Oho Y."/>
            <person name="Suzuki H."/>
            <person name="Kawai J."/>
            <person name="Hayashizaki Y."/>
        </authorList>
    </citation>
    <scope>NUCLEOTIDE SEQUENCE [LARGE SCALE MRNA]</scope>
    <source>
        <strain>C57BL/6J</strain>
        <tissue>Testis</tissue>
    </source>
</reference>
<reference key="3">
    <citation type="journal article" date="2010" name="Cell">
        <title>A tissue-specific atlas of mouse protein phosphorylation and expression.</title>
        <authorList>
            <person name="Huttlin E.L."/>
            <person name="Jedrychowski M.P."/>
            <person name="Elias J.E."/>
            <person name="Goswami T."/>
            <person name="Rad R."/>
            <person name="Beausoleil S.A."/>
            <person name="Villen J."/>
            <person name="Haas W."/>
            <person name="Sowa M.E."/>
            <person name="Gygi S.P."/>
        </authorList>
    </citation>
    <scope>IDENTIFICATION BY MASS SPECTROMETRY [LARGE SCALE ANALYSIS]</scope>
    <source>
        <tissue>Testis</tissue>
    </source>
</reference>
<reference key="4">
    <citation type="journal article" date="2005" name="Proc. Natl. Acad. Sci. U.S.A.">
        <title>Calcineurin regulates bone formation by the osteoblast.</title>
        <authorList>
            <person name="Sun L."/>
            <person name="Blair H.C."/>
            <person name="Peng Y."/>
            <person name="Zaidi N."/>
            <person name="Adebanjo O.A."/>
            <person name="Wu X.B."/>
            <person name="Wu X.Y."/>
            <person name="Iqbal J."/>
            <person name="Epstein S."/>
            <person name="Abe E."/>
            <person name="Moonga B.S."/>
            <person name="Zaidi M."/>
        </authorList>
    </citation>
    <scope>TISSUE SPECIFICITY</scope>
</reference>
<reference key="5">
    <citation type="journal article" date="2021" name="Proc. Natl. Acad. Sci. U.S.A.">
        <title>SPATA33 localizes calcineurin to the mitochondria and regulates sperm motility in mice.</title>
        <authorList>
            <person name="Miyata H."/>
            <person name="Oura S."/>
            <person name="Morohoshi A."/>
            <person name="Shimada K."/>
            <person name="Mashiko D."/>
            <person name="Oyama Y."/>
            <person name="Kaneda Y."/>
            <person name="Matsumura T."/>
            <person name="Abbasi F."/>
            <person name="Ikawa M."/>
        </authorList>
    </citation>
    <scope>SUBCELLULAR LOCATION</scope>
    <scope>TISSUE SPECIFICITY</scope>
    <scope>INTERACTION WITH SPATA33</scope>
</reference>
<name>CANB2_MOUSE</name>
<evidence type="ECO:0000250" key="1">
    <source>
        <dbReference type="UniProtKB" id="P63098"/>
    </source>
</evidence>
<evidence type="ECO:0000250" key="2">
    <source>
        <dbReference type="UniProtKB" id="Q63810"/>
    </source>
</evidence>
<evidence type="ECO:0000255" key="3">
    <source>
        <dbReference type="PROSITE-ProRule" id="PRU00448"/>
    </source>
</evidence>
<evidence type="ECO:0000269" key="4">
    <source>
    </source>
</evidence>
<evidence type="ECO:0000269" key="5">
    <source>
    </source>
</evidence>
<evidence type="ECO:0000269" key="6">
    <source>
    </source>
</evidence>
<evidence type="ECO:0000305" key="7"/>
<evidence type="ECO:0000305" key="8">
    <source>
    </source>
</evidence>
<organism>
    <name type="scientific">Mus musculus</name>
    <name type="common">Mouse</name>
    <dbReference type="NCBI Taxonomy" id="10090"/>
    <lineage>
        <taxon>Eukaryota</taxon>
        <taxon>Metazoa</taxon>
        <taxon>Chordata</taxon>
        <taxon>Craniata</taxon>
        <taxon>Vertebrata</taxon>
        <taxon>Euteleostomi</taxon>
        <taxon>Mammalia</taxon>
        <taxon>Eutheria</taxon>
        <taxon>Euarchontoglires</taxon>
        <taxon>Glires</taxon>
        <taxon>Rodentia</taxon>
        <taxon>Myomorpha</taxon>
        <taxon>Muroidea</taxon>
        <taxon>Muridae</taxon>
        <taxon>Murinae</taxon>
        <taxon>Mus</taxon>
        <taxon>Mus</taxon>
    </lineage>
</organism>
<comment type="function">
    <text evidence="2">Regulatory subunit of calcineurin, a calcium-dependent, calmodulin stimulated protein phosphatase. Confers calcium sensitivity.</text>
</comment>
<comment type="subunit">
    <text evidence="2 6">Forms a complex composed of a calmodulin-dependent catalytic subunit (also known as calcineurin A) and a regulatory Ca(2+)-binding subunit (also known as calcineurin B). There are three catalytic subunits, each encoded by a separate gene (PPP3CA, PPP3CB, and PPP3CC) and two regulatory subunits which are also encoded by separate genes (PPP3R1 and PPP3R2) (By similarity). Interacts with SPATA33 (via PQIIIT motif) (PubMed:34446558).</text>
</comment>
<comment type="subcellular location">
    <subcellularLocation>
        <location evidence="8">Mitochondrion</location>
    </subcellularLocation>
    <text evidence="8">Localizes in the mitochondria in a SPATA33-dependent manner.</text>
</comment>
<comment type="tissue specificity">
    <text evidence="4 5 6">Expressed in osteoblasts and bone marrow (at protein level) (PubMed:16286645). Expressed in the testis (PubMed:1325794, PubMed:34446558). Expressed in the sperm midpiece in a SPATA33-dependent manner (at protein level) (PubMed:34446558).</text>
</comment>
<comment type="miscellaneous">
    <text evidence="2">This protein has four functional calcium-binding sites.</text>
</comment>
<comment type="similarity">
    <text evidence="7">Belongs to the calcineurin regulatory subunit family.</text>
</comment>
<protein>
    <recommendedName>
        <fullName>Calcineurin subunit B type 2</fullName>
    </recommendedName>
    <alternativeName>
        <fullName>Protein phosphatase 2B regulatory subunit 2</fullName>
    </alternativeName>
    <alternativeName>
        <fullName>Protein phosphatase 3 regulatory subunit B beta isoform</fullName>
    </alternativeName>
</protein>
<dbReference type="EMBL" id="S43865">
    <property type="protein sequence ID" value="AAB23172.1"/>
    <property type="molecule type" value="mRNA"/>
</dbReference>
<dbReference type="EMBL" id="AK029998">
    <property type="protein sequence ID" value="BAC26725.1"/>
    <property type="molecule type" value="mRNA"/>
</dbReference>
<dbReference type="CCDS" id="CCDS18179.1"/>
<dbReference type="PIR" id="JC1221">
    <property type="entry name" value="JC1221"/>
</dbReference>
<dbReference type="RefSeq" id="NP_001004025.1">
    <property type="nucleotide sequence ID" value="NM_001004025.4"/>
</dbReference>
<dbReference type="SMR" id="Q63811"/>
<dbReference type="ComplexPortal" id="CPX-1008">
    <property type="entry name" value="Calcineurin-Calmodulin complex, beta-R2 variant"/>
</dbReference>
<dbReference type="ComplexPortal" id="CPX-1049">
    <property type="entry name" value="Calcineurin-Calmodulin complex, alpha-R2 variant"/>
</dbReference>
<dbReference type="ComplexPortal" id="CPX-1051">
    <property type="entry name" value="Calcineurin-Calmodulin complex, gamma-R2 variant"/>
</dbReference>
<dbReference type="ComplexPortal" id="CPX-1115">
    <property type="entry name" value="Calcineurin-Calmodulin-AKAP5 complex, alpha-R2 variant"/>
</dbReference>
<dbReference type="ComplexPortal" id="CPX-1117">
    <property type="entry name" value="Calcineurin-Calmodulin-AKAP5 complex, beta-R2 variant"/>
</dbReference>
<dbReference type="ComplexPortal" id="CPX-1119">
    <property type="entry name" value="Calcineurin-Calmodulin-AKAP5 complex, gamma-R2 variant"/>
</dbReference>
<dbReference type="CORUM" id="Q63811"/>
<dbReference type="FunCoup" id="Q63811">
    <property type="interactions" value="843"/>
</dbReference>
<dbReference type="STRING" id="10090.ENSMUSP00000029991"/>
<dbReference type="iPTMnet" id="Q63811"/>
<dbReference type="PhosphoSitePlus" id="Q63811"/>
<dbReference type="SwissPalm" id="Q63811"/>
<dbReference type="PaxDb" id="10090-ENSMUSP00000029991"/>
<dbReference type="ProteomicsDB" id="265329"/>
<dbReference type="Antibodypedia" id="29196">
    <property type="antibodies" value="196 antibodies from 28 providers"/>
</dbReference>
<dbReference type="DNASU" id="19059"/>
<dbReference type="Ensembl" id="ENSMUST00000029991.3">
    <property type="protein sequence ID" value="ENSMUSP00000029991.3"/>
    <property type="gene ID" value="ENSMUSG00000028310.3"/>
</dbReference>
<dbReference type="GeneID" id="19059"/>
<dbReference type="KEGG" id="mmu:19059"/>
<dbReference type="UCSC" id="uc008swd.1">
    <property type="organism name" value="mouse"/>
</dbReference>
<dbReference type="AGR" id="MGI:107171"/>
<dbReference type="CTD" id="5535"/>
<dbReference type="MGI" id="MGI:107171">
    <property type="gene designation" value="Ppp3r2"/>
</dbReference>
<dbReference type="VEuPathDB" id="HostDB:ENSMUSG00000028310"/>
<dbReference type="eggNOG" id="KOG0034">
    <property type="taxonomic scope" value="Eukaryota"/>
</dbReference>
<dbReference type="GeneTree" id="ENSGT00940000165130"/>
<dbReference type="HOGENOM" id="CLU_061288_10_1_1"/>
<dbReference type="InParanoid" id="Q63811"/>
<dbReference type="OMA" id="HSEMGTH"/>
<dbReference type="OrthoDB" id="191686at2759"/>
<dbReference type="PhylomeDB" id="Q63811"/>
<dbReference type="TreeFam" id="TF105558"/>
<dbReference type="BioGRID-ORCS" id="19059">
    <property type="hits" value="3 hits in 76 CRISPR screens"/>
</dbReference>
<dbReference type="PRO" id="PR:Q63811"/>
<dbReference type="Proteomes" id="UP000000589">
    <property type="component" value="Chromosome 4"/>
</dbReference>
<dbReference type="RNAct" id="Q63811">
    <property type="molecule type" value="protein"/>
</dbReference>
<dbReference type="Bgee" id="ENSMUSG00000028310">
    <property type="expression patterns" value="Expressed in seminiferous tubule of testis and 26 other cell types or tissues"/>
</dbReference>
<dbReference type="ExpressionAtlas" id="Q63811">
    <property type="expression patterns" value="baseline and differential"/>
</dbReference>
<dbReference type="GO" id="GO:0005955">
    <property type="term" value="C:calcineurin complex"/>
    <property type="evidence" value="ECO:0000314"/>
    <property type="project" value="MGI"/>
</dbReference>
<dbReference type="GO" id="GO:0005829">
    <property type="term" value="C:cytosol"/>
    <property type="evidence" value="ECO:0000303"/>
    <property type="project" value="ComplexPortal"/>
</dbReference>
<dbReference type="GO" id="GO:0005739">
    <property type="term" value="C:mitochondrion"/>
    <property type="evidence" value="ECO:0007669"/>
    <property type="project" value="UniProtKB-SubCell"/>
</dbReference>
<dbReference type="GO" id="GO:0008287">
    <property type="term" value="C:protein serine/threonine phosphatase complex"/>
    <property type="evidence" value="ECO:0000303"/>
    <property type="project" value="ComplexPortal"/>
</dbReference>
<dbReference type="GO" id="GO:0036126">
    <property type="term" value="C:sperm flagellum"/>
    <property type="evidence" value="ECO:0000314"/>
    <property type="project" value="MGI"/>
</dbReference>
<dbReference type="GO" id="GO:0097225">
    <property type="term" value="C:sperm midpiece"/>
    <property type="evidence" value="ECO:0000314"/>
    <property type="project" value="UniProtKB"/>
</dbReference>
<dbReference type="GO" id="GO:0097226">
    <property type="term" value="C:sperm mitochondrial sheath"/>
    <property type="evidence" value="ECO:0000314"/>
    <property type="project" value="MGI"/>
</dbReference>
<dbReference type="GO" id="GO:0005509">
    <property type="term" value="F:calcium ion binding"/>
    <property type="evidence" value="ECO:0007669"/>
    <property type="project" value="InterPro"/>
</dbReference>
<dbReference type="GO" id="GO:0008597">
    <property type="term" value="F:calcium-dependent protein serine/threonine phosphatase regulator activity"/>
    <property type="evidence" value="ECO:0000314"/>
    <property type="project" value="MGI"/>
</dbReference>
<dbReference type="GO" id="GO:1905949">
    <property type="term" value="P:negative regulation of calcium ion import across plasma membrane"/>
    <property type="evidence" value="ECO:0000303"/>
    <property type="project" value="ComplexPortal"/>
</dbReference>
<dbReference type="GO" id="GO:0007341">
    <property type="term" value="P:penetration of zona pellucida"/>
    <property type="evidence" value="ECO:0000315"/>
    <property type="project" value="MGI"/>
</dbReference>
<dbReference type="GO" id="GO:0070886">
    <property type="term" value="P:positive regulation of calcineurin-NFAT signaling cascade"/>
    <property type="evidence" value="ECO:0000303"/>
    <property type="project" value="ComplexPortal"/>
</dbReference>
<dbReference type="GO" id="GO:1905665">
    <property type="term" value="P:positive regulation of calcium ion import across plasma membrane"/>
    <property type="evidence" value="ECO:0000303"/>
    <property type="project" value="ComplexPortal"/>
</dbReference>
<dbReference type="CDD" id="cd00051">
    <property type="entry name" value="EFh"/>
    <property type="match status" value="1"/>
</dbReference>
<dbReference type="FunFam" id="1.10.238.10:FF:000047">
    <property type="entry name" value="Calcineurin subunit B type 1"/>
    <property type="match status" value="1"/>
</dbReference>
<dbReference type="Gene3D" id="1.10.238.10">
    <property type="entry name" value="EF-hand"/>
    <property type="match status" value="1"/>
</dbReference>
<dbReference type="InterPro" id="IPR011992">
    <property type="entry name" value="EF-hand-dom_pair"/>
</dbReference>
<dbReference type="InterPro" id="IPR018247">
    <property type="entry name" value="EF_Hand_1_Ca_BS"/>
</dbReference>
<dbReference type="InterPro" id="IPR002048">
    <property type="entry name" value="EF_hand_dom"/>
</dbReference>
<dbReference type="PANTHER" id="PTHR45942">
    <property type="entry name" value="PROTEIN PHOSPATASE 3 REGULATORY SUBUNIT B ALPHA ISOFORM TYPE 1"/>
    <property type="match status" value="1"/>
</dbReference>
<dbReference type="Pfam" id="PF13499">
    <property type="entry name" value="EF-hand_7"/>
    <property type="match status" value="2"/>
</dbReference>
<dbReference type="SMART" id="SM00054">
    <property type="entry name" value="EFh"/>
    <property type="match status" value="4"/>
</dbReference>
<dbReference type="SUPFAM" id="SSF47473">
    <property type="entry name" value="EF-hand"/>
    <property type="match status" value="1"/>
</dbReference>
<dbReference type="PROSITE" id="PS00018">
    <property type="entry name" value="EF_HAND_1"/>
    <property type="match status" value="4"/>
</dbReference>
<dbReference type="PROSITE" id="PS50222">
    <property type="entry name" value="EF_HAND_2"/>
    <property type="match status" value="4"/>
</dbReference>
<accession>Q63811</accession>